<evidence type="ECO:0000255" key="1">
    <source>
        <dbReference type="HAMAP-Rule" id="MF_00098"/>
    </source>
</evidence>
<evidence type="ECO:0000256" key="2">
    <source>
        <dbReference type="SAM" id="MobiDB-lite"/>
    </source>
</evidence>
<dbReference type="EC" id="6.1.1.10" evidence="1"/>
<dbReference type="EMBL" id="CP000159">
    <property type="protein sequence ID" value="ABC44493.1"/>
    <property type="molecule type" value="Genomic_DNA"/>
</dbReference>
<dbReference type="RefSeq" id="WP_011404304.1">
    <property type="nucleotide sequence ID" value="NC_007677.1"/>
</dbReference>
<dbReference type="RefSeq" id="YP_445678.1">
    <property type="nucleotide sequence ID" value="NC_007677.1"/>
</dbReference>
<dbReference type="SMR" id="Q2S2A3"/>
<dbReference type="STRING" id="309807.SRU_1557"/>
<dbReference type="EnsemblBacteria" id="ABC44493">
    <property type="protein sequence ID" value="ABC44493"/>
    <property type="gene ID" value="SRU_1557"/>
</dbReference>
<dbReference type="KEGG" id="sru:SRU_1557"/>
<dbReference type="PATRIC" id="fig|309807.25.peg.1611"/>
<dbReference type="eggNOG" id="COG0073">
    <property type="taxonomic scope" value="Bacteria"/>
</dbReference>
<dbReference type="eggNOG" id="COG0143">
    <property type="taxonomic scope" value="Bacteria"/>
</dbReference>
<dbReference type="HOGENOM" id="CLU_009710_1_2_10"/>
<dbReference type="OrthoDB" id="9810191at2"/>
<dbReference type="Proteomes" id="UP000008674">
    <property type="component" value="Chromosome"/>
</dbReference>
<dbReference type="GO" id="GO:0005829">
    <property type="term" value="C:cytosol"/>
    <property type="evidence" value="ECO:0007669"/>
    <property type="project" value="TreeGrafter"/>
</dbReference>
<dbReference type="GO" id="GO:0005524">
    <property type="term" value="F:ATP binding"/>
    <property type="evidence" value="ECO:0007669"/>
    <property type="project" value="UniProtKB-UniRule"/>
</dbReference>
<dbReference type="GO" id="GO:0046872">
    <property type="term" value="F:metal ion binding"/>
    <property type="evidence" value="ECO:0007669"/>
    <property type="project" value="UniProtKB-KW"/>
</dbReference>
<dbReference type="GO" id="GO:0004825">
    <property type="term" value="F:methionine-tRNA ligase activity"/>
    <property type="evidence" value="ECO:0007669"/>
    <property type="project" value="UniProtKB-UniRule"/>
</dbReference>
<dbReference type="GO" id="GO:0000049">
    <property type="term" value="F:tRNA binding"/>
    <property type="evidence" value="ECO:0007669"/>
    <property type="project" value="UniProtKB-KW"/>
</dbReference>
<dbReference type="GO" id="GO:0006431">
    <property type="term" value="P:methionyl-tRNA aminoacylation"/>
    <property type="evidence" value="ECO:0007669"/>
    <property type="project" value="UniProtKB-UniRule"/>
</dbReference>
<dbReference type="CDD" id="cd07957">
    <property type="entry name" value="Anticodon_Ia_Met"/>
    <property type="match status" value="1"/>
</dbReference>
<dbReference type="CDD" id="cd00814">
    <property type="entry name" value="MetRS_core"/>
    <property type="match status" value="1"/>
</dbReference>
<dbReference type="FunFam" id="2.20.28.20:FF:000001">
    <property type="entry name" value="Methionine--tRNA ligase"/>
    <property type="match status" value="1"/>
</dbReference>
<dbReference type="Gene3D" id="3.40.50.620">
    <property type="entry name" value="HUPs"/>
    <property type="match status" value="1"/>
</dbReference>
<dbReference type="Gene3D" id="1.10.730.10">
    <property type="entry name" value="Isoleucyl-tRNA Synthetase, Domain 1"/>
    <property type="match status" value="1"/>
</dbReference>
<dbReference type="Gene3D" id="2.20.28.20">
    <property type="entry name" value="Methionyl-tRNA synthetase, Zn-domain"/>
    <property type="match status" value="1"/>
</dbReference>
<dbReference type="Gene3D" id="2.40.50.140">
    <property type="entry name" value="Nucleic acid-binding proteins"/>
    <property type="match status" value="1"/>
</dbReference>
<dbReference type="HAMAP" id="MF_00098">
    <property type="entry name" value="Met_tRNA_synth_type1"/>
    <property type="match status" value="1"/>
</dbReference>
<dbReference type="InterPro" id="IPR001412">
    <property type="entry name" value="aa-tRNA-synth_I_CS"/>
</dbReference>
<dbReference type="InterPro" id="IPR041872">
    <property type="entry name" value="Anticodon_Met"/>
</dbReference>
<dbReference type="InterPro" id="IPR023458">
    <property type="entry name" value="Met-tRNA_ligase_1"/>
</dbReference>
<dbReference type="InterPro" id="IPR014758">
    <property type="entry name" value="Met-tRNA_synth"/>
</dbReference>
<dbReference type="InterPro" id="IPR015413">
    <property type="entry name" value="Methionyl/Leucyl_tRNA_Synth"/>
</dbReference>
<dbReference type="InterPro" id="IPR033911">
    <property type="entry name" value="MetRS_core"/>
</dbReference>
<dbReference type="InterPro" id="IPR029038">
    <property type="entry name" value="MetRS_Zn"/>
</dbReference>
<dbReference type="InterPro" id="IPR012340">
    <property type="entry name" value="NA-bd_OB-fold"/>
</dbReference>
<dbReference type="InterPro" id="IPR014729">
    <property type="entry name" value="Rossmann-like_a/b/a_fold"/>
</dbReference>
<dbReference type="InterPro" id="IPR002547">
    <property type="entry name" value="tRNA-bd_dom"/>
</dbReference>
<dbReference type="InterPro" id="IPR009080">
    <property type="entry name" value="tRNAsynth_Ia_anticodon-bd"/>
</dbReference>
<dbReference type="NCBIfam" id="TIGR00398">
    <property type="entry name" value="metG"/>
    <property type="match status" value="1"/>
</dbReference>
<dbReference type="NCBIfam" id="NF001100">
    <property type="entry name" value="PRK00133.1"/>
    <property type="match status" value="1"/>
</dbReference>
<dbReference type="PANTHER" id="PTHR45765">
    <property type="entry name" value="METHIONINE--TRNA LIGASE"/>
    <property type="match status" value="1"/>
</dbReference>
<dbReference type="PANTHER" id="PTHR45765:SF1">
    <property type="entry name" value="METHIONINE--TRNA LIGASE, CYTOPLASMIC"/>
    <property type="match status" value="1"/>
</dbReference>
<dbReference type="Pfam" id="PF19303">
    <property type="entry name" value="Anticodon_3"/>
    <property type="match status" value="1"/>
</dbReference>
<dbReference type="Pfam" id="PF09334">
    <property type="entry name" value="tRNA-synt_1g"/>
    <property type="match status" value="1"/>
</dbReference>
<dbReference type="Pfam" id="PF01588">
    <property type="entry name" value="tRNA_bind"/>
    <property type="match status" value="1"/>
</dbReference>
<dbReference type="PRINTS" id="PR01041">
    <property type="entry name" value="TRNASYNTHMET"/>
</dbReference>
<dbReference type="SUPFAM" id="SSF47323">
    <property type="entry name" value="Anticodon-binding domain of a subclass of class I aminoacyl-tRNA synthetases"/>
    <property type="match status" value="1"/>
</dbReference>
<dbReference type="SUPFAM" id="SSF57770">
    <property type="entry name" value="Methionyl-tRNA synthetase (MetRS), Zn-domain"/>
    <property type="match status" value="1"/>
</dbReference>
<dbReference type="SUPFAM" id="SSF50249">
    <property type="entry name" value="Nucleic acid-binding proteins"/>
    <property type="match status" value="1"/>
</dbReference>
<dbReference type="SUPFAM" id="SSF52374">
    <property type="entry name" value="Nucleotidylyl transferase"/>
    <property type="match status" value="1"/>
</dbReference>
<dbReference type="PROSITE" id="PS00178">
    <property type="entry name" value="AA_TRNA_LIGASE_I"/>
    <property type="match status" value="1"/>
</dbReference>
<dbReference type="PROSITE" id="PS50886">
    <property type="entry name" value="TRBD"/>
    <property type="match status" value="1"/>
</dbReference>
<gene>
    <name evidence="1" type="primary">metG</name>
    <name type="ordered locus">SRU_1557</name>
</gene>
<reference key="1">
    <citation type="journal article" date="2005" name="Proc. Natl. Acad. Sci. U.S.A.">
        <title>The genome of Salinibacter ruber: convergence and gene exchange among hyperhalophilic bacteria and archaea.</title>
        <authorList>
            <person name="Mongodin E.F."/>
            <person name="Nelson K.E."/>
            <person name="Daugherty S."/>
            <person name="DeBoy R.T."/>
            <person name="Wister J."/>
            <person name="Khouri H."/>
            <person name="Weidman J."/>
            <person name="Walsh D.A."/>
            <person name="Papke R.T."/>
            <person name="Sanchez Perez G."/>
            <person name="Sharma A.K."/>
            <person name="Nesbo C.L."/>
            <person name="MacLeod D."/>
            <person name="Bapteste E."/>
            <person name="Doolittle W.F."/>
            <person name="Charlebois R.L."/>
            <person name="Legault B."/>
            <person name="Rodriguez-Valera F."/>
        </authorList>
    </citation>
    <scope>NUCLEOTIDE SEQUENCE [LARGE SCALE GENOMIC DNA]</scope>
    <source>
        <strain>DSM 13855 / CECT 5946 / M31</strain>
    </source>
</reference>
<protein>
    <recommendedName>
        <fullName evidence="1">Methionine--tRNA ligase</fullName>
        <ecNumber evidence="1">6.1.1.10</ecNumber>
    </recommendedName>
    <alternativeName>
        <fullName evidence="1">Methionyl-tRNA synthetase</fullName>
        <shortName evidence="1">MetRS</shortName>
    </alternativeName>
</protein>
<name>SYM_SALRD</name>
<accession>Q2S2A3</accession>
<feature type="chain" id="PRO_0000331896" description="Methionine--tRNA ligase">
    <location>
        <begin position="1"/>
        <end position="713"/>
    </location>
</feature>
<feature type="domain" description="tRNA-binding" evidence="1">
    <location>
        <begin position="614"/>
        <end position="713"/>
    </location>
</feature>
<feature type="region of interest" description="Disordered" evidence="2">
    <location>
        <begin position="530"/>
        <end position="564"/>
    </location>
</feature>
<feature type="short sequence motif" description="'HIGH' region">
    <location>
        <begin position="17"/>
        <end position="27"/>
    </location>
</feature>
<feature type="short sequence motif" description="'KMSKS' region">
    <location>
        <begin position="345"/>
        <end position="349"/>
    </location>
</feature>
<feature type="binding site" evidence="1">
    <location>
        <position position="149"/>
    </location>
    <ligand>
        <name>Zn(2+)</name>
        <dbReference type="ChEBI" id="CHEBI:29105"/>
    </ligand>
</feature>
<feature type="binding site" evidence="1">
    <location>
        <position position="152"/>
    </location>
    <ligand>
        <name>Zn(2+)</name>
        <dbReference type="ChEBI" id="CHEBI:29105"/>
    </ligand>
</feature>
<feature type="binding site" evidence="1">
    <location>
        <position position="162"/>
    </location>
    <ligand>
        <name>Zn(2+)</name>
        <dbReference type="ChEBI" id="CHEBI:29105"/>
    </ligand>
</feature>
<feature type="binding site" evidence="1">
    <location>
        <position position="165"/>
    </location>
    <ligand>
        <name>Zn(2+)</name>
        <dbReference type="ChEBI" id="CHEBI:29105"/>
    </ligand>
</feature>
<feature type="binding site" evidence="1">
    <location>
        <position position="348"/>
    </location>
    <ligand>
        <name>ATP</name>
        <dbReference type="ChEBI" id="CHEBI:30616"/>
    </ligand>
</feature>
<proteinExistence type="inferred from homology"/>
<keyword id="KW-0030">Aminoacyl-tRNA synthetase</keyword>
<keyword id="KW-0067">ATP-binding</keyword>
<keyword id="KW-0963">Cytoplasm</keyword>
<keyword id="KW-0436">Ligase</keyword>
<keyword id="KW-0479">Metal-binding</keyword>
<keyword id="KW-0547">Nucleotide-binding</keyword>
<keyword id="KW-0648">Protein biosynthesis</keyword>
<keyword id="KW-1185">Reference proteome</keyword>
<keyword id="KW-0694">RNA-binding</keyword>
<keyword id="KW-0820">tRNA-binding</keyword>
<keyword id="KW-0862">Zinc</keyword>
<organism>
    <name type="scientific">Salinibacter ruber (strain DSM 13855 / M31)</name>
    <dbReference type="NCBI Taxonomy" id="309807"/>
    <lineage>
        <taxon>Bacteria</taxon>
        <taxon>Pseudomonadati</taxon>
        <taxon>Rhodothermota</taxon>
        <taxon>Rhodothermia</taxon>
        <taxon>Rhodothermales</taxon>
        <taxon>Salinibacteraceae</taxon>
        <taxon>Salinibacter</taxon>
    </lineage>
</organism>
<comment type="function">
    <text evidence="1">Is required not only for elongation of protein synthesis but also for the initiation of all mRNA translation through initiator tRNA(fMet) aminoacylation.</text>
</comment>
<comment type="catalytic activity">
    <reaction evidence="1">
        <text>tRNA(Met) + L-methionine + ATP = L-methionyl-tRNA(Met) + AMP + diphosphate</text>
        <dbReference type="Rhea" id="RHEA:13481"/>
        <dbReference type="Rhea" id="RHEA-COMP:9667"/>
        <dbReference type="Rhea" id="RHEA-COMP:9698"/>
        <dbReference type="ChEBI" id="CHEBI:30616"/>
        <dbReference type="ChEBI" id="CHEBI:33019"/>
        <dbReference type="ChEBI" id="CHEBI:57844"/>
        <dbReference type="ChEBI" id="CHEBI:78442"/>
        <dbReference type="ChEBI" id="CHEBI:78530"/>
        <dbReference type="ChEBI" id="CHEBI:456215"/>
        <dbReference type="EC" id="6.1.1.10"/>
    </reaction>
</comment>
<comment type="cofactor">
    <cofactor evidence="1">
        <name>Zn(2+)</name>
        <dbReference type="ChEBI" id="CHEBI:29105"/>
    </cofactor>
    <text evidence="1">Binds 1 zinc ion per subunit.</text>
</comment>
<comment type="subunit">
    <text evidence="1">Homodimer.</text>
</comment>
<comment type="subcellular location">
    <subcellularLocation>
        <location evidence="1">Cytoplasm</location>
    </subcellularLocation>
</comment>
<comment type="similarity">
    <text evidence="1">Belongs to the class-I aminoacyl-tRNA synthetase family. MetG type 1 subfamily.</text>
</comment>
<sequence length="713" mass="79772">MADPTSSERLLVTAALPYANGPIHIGHLAGAYLPADLFVRYQRLKGEDVAFICGSDEMGVAILMRAIREDRTPEDIIDTYHPQIRDNFERFGMSFDYYGRTSSETHTETTQDFFRVLDENGGFDLKTDEQLYDPEAEMFLADRFVIGTCPVCGFEEAYGDQCEQCGSSLSPTELENPQSTLTDATPEFKETTHWYLPLGELQPQLEEWIGSHPEWKNNVVGQIQSWFDEGLKGRAITRDVLWGVPVPDDVAERHGLEAEGKVIYVWFDAPIGYISATKEWAAEQGEPDAWTDYWQDEDTRLVHFIGKDNIVFHCLMFPSMLMEHGDYVLPDNVPANEFLNLEGEKLSTSRGWAVWLHEYLDDFADERHAPDLLRYALATTLPETKDADFSWEGFQQRVNGELANVFGNFVHRTLTFAQRYFDGTVPPLEDPSEADRVMLDRMAEVPDTVGAAYEEHRTRDAVFETMALARRGNKYFNDTEPWHTHESDPQACANTIHVSLQVCAALSILFEPVLPSAAATLRERIGLENVRTSTPDDDPAGAVGWEDAGAPLLPAGHPIPSGPDPEPLFQKIDDDTIEAQIEKLRDRAAERDTDPSSTTDMDYEALSDNISFDDFTQLDLRAGTVTTAEPVPDADKLLRLEVDLGFEERQILAGVAEQMAPDDVVGLEVVVVANMAPKEMFGFESQGMVLMAEEPDGTFVPVTTEAEDGSVVR</sequence>